<evidence type="ECO:0000255" key="1">
    <source>
        <dbReference type="HAMAP-Rule" id="MF_01318"/>
    </source>
</evidence>
<evidence type="ECO:0000305" key="2"/>
<accession>B3GYU5</accession>
<protein>
    <recommendedName>
        <fullName evidence="1">Large ribosomal subunit protein uL1</fullName>
    </recommendedName>
    <alternativeName>
        <fullName evidence="2">50S ribosomal protein L1</fullName>
    </alternativeName>
</protein>
<dbReference type="EMBL" id="CP001091">
    <property type="protein sequence ID" value="ACE62431.1"/>
    <property type="molecule type" value="Genomic_DNA"/>
</dbReference>
<dbReference type="RefSeq" id="WP_005599212.1">
    <property type="nucleotide sequence ID" value="NC_010939.1"/>
</dbReference>
<dbReference type="SMR" id="B3GYU5"/>
<dbReference type="GeneID" id="92743717"/>
<dbReference type="KEGG" id="apa:APP7_1779"/>
<dbReference type="HOGENOM" id="CLU_062853_0_0_6"/>
<dbReference type="Proteomes" id="UP000001226">
    <property type="component" value="Chromosome"/>
</dbReference>
<dbReference type="GO" id="GO:0022625">
    <property type="term" value="C:cytosolic large ribosomal subunit"/>
    <property type="evidence" value="ECO:0007669"/>
    <property type="project" value="TreeGrafter"/>
</dbReference>
<dbReference type="GO" id="GO:0019843">
    <property type="term" value="F:rRNA binding"/>
    <property type="evidence" value="ECO:0007669"/>
    <property type="project" value="UniProtKB-UniRule"/>
</dbReference>
<dbReference type="GO" id="GO:0003735">
    <property type="term" value="F:structural constituent of ribosome"/>
    <property type="evidence" value="ECO:0007669"/>
    <property type="project" value="InterPro"/>
</dbReference>
<dbReference type="GO" id="GO:0000049">
    <property type="term" value="F:tRNA binding"/>
    <property type="evidence" value="ECO:0007669"/>
    <property type="project" value="UniProtKB-KW"/>
</dbReference>
<dbReference type="GO" id="GO:0006417">
    <property type="term" value="P:regulation of translation"/>
    <property type="evidence" value="ECO:0007669"/>
    <property type="project" value="UniProtKB-KW"/>
</dbReference>
<dbReference type="GO" id="GO:0006412">
    <property type="term" value="P:translation"/>
    <property type="evidence" value="ECO:0007669"/>
    <property type="project" value="UniProtKB-UniRule"/>
</dbReference>
<dbReference type="CDD" id="cd00403">
    <property type="entry name" value="Ribosomal_L1"/>
    <property type="match status" value="1"/>
</dbReference>
<dbReference type="FunFam" id="3.40.50.790:FF:000001">
    <property type="entry name" value="50S ribosomal protein L1"/>
    <property type="match status" value="1"/>
</dbReference>
<dbReference type="Gene3D" id="3.30.190.20">
    <property type="match status" value="1"/>
</dbReference>
<dbReference type="Gene3D" id="3.40.50.790">
    <property type="match status" value="1"/>
</dbReference>
<dbReference type="HAMAP" id="MF_01318_B">
    <property type="entry name" value="Ribosomal_uL1_B"/>
    <property type="match status" value="1"/>
</dbReference>
<dbReference type="InterPro" id="IPR005878">
    <property type="entry name" value="Ribosom_uL1_bac-type"/>
</dbReference>
<dbReference type="InterPro" id="IPR002143">
    <property type="entry name" value="Ribosomal_uL1"/>
</dbReference>
<dbReference type="InterPro" id="IPR023674">
    <property type="entry name" value="Ribosomal_uL1-like"/>
</dbReference>
<dbReference type="InterPro" id="IPR028364">
    <property type="entry name" value="Ribosomal_uL1/biogenesis"/>
</dbReference>
<dbReference type="InterPro" id="IPR016095">
    <property type="entry name" value="Ribosomal_uL1_3-a/b-sand"/>
</dbReference>
<dbReference type="InterPro" id="IPR023673">
    <property type="entry name" value="Ribosomal_uL1_CS"/>
</dbReference>
<dbReference type="NCBIfam" id="TIGR01169">
    <property type="entry name" value="rplA_bact"/>
    <property type="match status" value="1"/>
</dbReference>
<dbReference type="PANTHER" id="PTHR36427">
    <property type="entry name" value="54S RIBOSOMAL PROTEIN L1, MITOCHONDRIAL"/>
    <property type="match status" value="1"/>
</dbReference>
<dbReference type="PANTHER" id="PTHR36427:SF3">
    <property type="entry name" value="LARGE RIBOSOMAL SUBUNIT PROTEIN UL1M"/>
    <property type="match status" value="1"/>
</dbReference>
<dbReference type="Pfam" id="PF00687">
    <property type="entry name" value="Ribosomal_L1"/>
    <property type="match status" value="1"/>
</dbReference>
<dbReference type="PIRSF" id="PIRSF002155">
    <property type="entry name" value="Ribosomal_L1"/>
    <property type="match status" value="1"/>
</dbReference>
<dbReference type="SUPFAM" id="SSF56808">
    <property type="entry name" value="Ribosomal protein L1"/>
    <property type="match status" value="1"/>
</dbReference>
<dbReference type="PROSITE" id="PS01199">
    <property type="entry name" value="RIBOSOMAL_L1"/>
    <property type="match status" value="1"/>
</dbReference>
<organism>
    <name type="scientific">Actinobacillus pleuropneumoniae serotype 7 (strain AP76)</name>
    <dbReference type="NCBI Taxonomy" id="537457"/>
    <lineage>
        <taxon>Bacteria</taxon>
        <taxon>Pseudomonadati</taxon>
        <taxon>Pseudomonadota</taxon>
        <taxon>Gammaproteobacteria</taxon>
        <taxon>Pasteurellales</taxon>
        <taxon>Pasteurellaceae</taxon>
        <taxon>Actinobacillus</taxon>
    </lineage>
</organism>
<name>RL1_ACTP7</name>
<reference key="1">
    <citation type="submission" date="2008-06" db="EMBL/GenBank/DDBJ databases">
        <title>Genome and proteome analysis of A. pleuropneumoniae serotype 7.</title>
        <authorList>
            <person name="Linke B."/>
            <person name="Buettner F."/>
            <person name="Martinez-Arias R."/>
            <person name="Goesmann A."/>
            <person name="Baltes N."/>
            <person name="Tegetmeyer H."/>
            <person name="Singh M."/>
            <person name="Gerlach G.F."/>
        </authorList>
    </citation>
    <scope>NUCLEOTIDE SEQUENCE [LARGE SCALE GENOMIC DNA]</scope>
    <source>
        <strain>AP76</strain>
    </source>
</reference>
<keyword id="KW-0678">Repressor</keyword>
<keyword id="KW-0687">Ribonucleoprotein</keyword>
<keyword id="KW-0689">Ribosomal protein</keyword>
<keyword id="KW-0694">RNA-binding</keyword>
<keyword id="KW-0699">rRNA-binding</keyword>
<keyword id="KW-0810">Translation regulation</keyword>
<keyword id="KW-0820">tRNA-binding</keyword>
<sequence length="229" mass="23947">MAKLTKKMKAIKAGVDSTKAYEINEAIAVLKQFATAKFVESVDVAVNLGIDPRKSDQNVRGATVLPHGTGRTARVAVFTQGANAEAAKAAGADLVGMEDLAEQIKKGEMNFDVVIASPDAMRVVGQLGQVLGPRGLMPNPKVGTVTPNVAEAVKNAKSGQIRYRNDKNGIIHTTIGKADFAPEQLKDNLVALLAALNKAKPTTAKGIFIKKVSISTTMGAGVAVDQASL</sequence>
<proteinExistence type="inferred from homology"/>
<feature type="chain" id="PRO_1000141350" description="Large ribosomal subunit protein uL1">
    <location>
        <begin position="1"/>
        <end position="229"/>
    </location>
</feature>
<gene>
    <name evidence="1" type="primary">rplA</name>
    <name type="ordered locus">APP7_1779</name>
</gene>
<comment type="function">
    <text evidence="1">Binds directly to 23S rRNA. The L1 stalk is quite mobile in the ribosome, and is involved in E site tRNA release.</text>
</comment>
<comment type="function">
    <text evidence="1">Protein L1 is also a translational repressor protein, it controls the translation of the L11 operon by binding to its mRNA.</text>
</comment>
<comment type="subunit">
    <text evidence="1">Part of the 50S ribosomal subunit.</text>
</comment>
<comment type="similarity">
    <text evidence="1">Belongs to the universal ribosomal protein uL1 family.</text>
</comment>